<accession>P80952</accession>
<keyword id="KW-0027">Amidation</keyword>
<keyword id="KW-0044">Antibiotic</keyword>
<keyword id="KW-0929">Antimicrobial</keyword>
<keyword id="KW-0903">Direct protein sequencing</keyword>
<keyword id="KW-0295">Fungicide</keyword>
<keyword id="KW-0372">Hormone</keyword>
<keyword id="KW-0964">Secreted</keyword>
<dbReference type="SMR" id="P80952"/>
<dbReference type="GO" id="GO:0005615">
    <property type="term" value="C:extracellular space"/>
    <property type="evidence" value="ECO:0007669"/>
    <property type="project" value="TreeGrafter"/>
</dbReference>
<dbReference type="GO" id="GO:0005184">
    <property type="term" value="F:neuropeptide hormone activity"/>
    <property type="evidence" value="ECO:0007669"/>
    <property type="project" value="TreeGrafter"/>
</dbReference>
<dbReference type="GO" id="GO:0031841">
    <property type="term" value="F:neuropeptide Y receptor binding"/>
    <property type="evidence" value="ECO:0007669"/>
    <property type="project" value="TreeGrafter"/>
</dbReference>
<dbReference type="GO" id="GO:0042742">
    <property type="term" value="P:defense response to bacterium"/>
    <property type="evidence" value="ECO:0007669"/>
    <property type="project" value="UniProtKB-KW"/>
</dbReference>
<dbReference type="GO" id="GO:0050832">
    <property type="term" value="P:defense response to fungus"/>
    <property type="evidence" value="ECO:0007669"/>
    <property type="project" value="UniProtKB-KW"/>
</dbReference>
<dbReference type="GO" id="GO:0007631">
    <property type="term" value="P:feeding behavior"/>
    <property type="evidence" value="ECO:0007669"/>
    <property type="project" value="TreeGrafter"/>
</dbReference>
<dbReference type="GO" id="GO:0031640">
    <property type="term" value="P:killing of cells of another organism"/>
    <property type="evidence" value="ECO:0007669"/>
    <property type="project" value="UniProtKB-KW"/>
</dbReference>
<dbReference type="GO" id="GO:0007218">
    <property type="term" value="P:neuropeptide signaling pathway"/>
    <property type="evidence" value="ECO:0007669"/>
    <property type="project" value="TreeGrafter"/>
</dbReference>
<dbReference type="CDD" id="cd00126">
    <property type="entry name" value="PAH"/>
    <property type="match status" value="1"/>
</dbReference>
<dbReference type="Gene3D" id="6.10.250.900">
    <property type="match status" value="1"/>
</dbReference>
<dbReference type="InterPro" id="IPR001955">
    <property type="entry name" value="Pancreatic_hormone-like"/>
</dbReference>
<dbReference type="InterPro" id="IPR020392">
    <property type="entry name" value="Pancreatic_hormone-like_CS"/>
</dbReference>
<dbReference type="PANTHER" id="PTHR10533">
    <property type="entry name" value="NEUROPEPTIDE Y/PANCREATIC HORMONE/PEPTIDE YY"/>
    <property type="match status" value="1"/>
</dbReference>
<dbReference type="PANTHER" id="PTHR10533:SF14">
    <property type="entry name" value="PEPTIDE YY-RELATED"/>
    <property type="match status" value="1"/>
</dbReference>
<dbReference type="Pfam" id="PF00159">
    <property type="entry name" value="Hormone_3"/>
    <property type="match status" value="1"/>
</dbReference>
<dbReference type="PRINTS" id="PR00278">
    <property type="entry name" value="PANCHORMONE"/>
</dbReference>
<dbReference type="SMART" id="SM00309">
    <property type="entry name" value="PAH"/>
    <property type="match status" value="1"/>
</dbReference>
<dbReference type="PROSITE" id="PS00265">
    <property type="entry name" value="PANCREATIC_HORMONE_1"/>
    <property type="match status" value="1"/>
</dbReference>
<dbReference type="PROSITE" id="PS50276">
    <property type="entry name" value="PANCREATIC_HORMONE_2"/>
    <property type="match status" value="1"/>
</dbReference>
<name>SPYY_PHYBI</name>
<feature type="peptide" id="PRO_0000044826" description="Skin peptide tyrosine-tyrosine">
    <location>
        <begin position="1"/>
        <end position="36"/>
    </location>
</feature>
<feature type="modified residue" description="Tyrosine amide" evidence="1">
    <location>
        <position position="36"/>
    </location>
</feature>
<comment type="function">
    <text>Shows a broad spectrum of antibacterial activity against Gram-positive and Gram-negative bacteria, yeast and fungi.</text>
</comment>
<comment type="subcellular location">
    <subcellularLocation>
        <location>Secreted</location>
    </subcellularLocation>
</comment>
<comment type="tissue specificity">
    <text>Skin.</text>
</comment>
<comment type="similarity">
    <text evidence="2">Belongs to the NPY family.</text>
</comment>
<sequence length="36" mass="4265">YPPKPESPGEDASPEEMNKYLTALRHYINLVTRQRY</sequence>
<evidence type="ECO:0000250" key="1"/>
<evidence type="ECO:0000305" key="2"/>
<proteinExistence type="evidence at protein level"/>
<organism>
    <name type="scientific">Phyllomedusa bicolor</name>
    <name type="common">Two-colored leaf frog</name>
    <name type="synonym">Rana bicolor</name>
    <dbReference type="NCBI Taxonomy" id="8393"/>
    <lineage>
        <taxon>Eukaryota</taxon>
        <taxon>Metazoa</taxon>
        <taxon>Chordata</taxon>
        <taxon>Craniata</taxon>
        <taxon>Vertebrata</taxon>
        <taxon>Euteleostomi</taxon>
        <taxon>Amphibia</taxon>
        <taxon>Batrachia</taxon>
        <taxon>Anura</taxon>
        <taxon>Neobatrachia</taxon>
        <taxon>Hyloidea</taxon>
        <taxon>Hylidae</taxon>
        <taxon>Phyllomedusinae</taxon>
        <taxon>Phyllomedusa</taxon>
    </lineage>
</organism>
<reference key="1">
    <citation type="journal article" date="1994" name="Proc. Natl. Acad. Sci. U.S.A.">
        <title>Skin peptide tyrosine-tyrosine, a member of the pancreatic polypeptide family: isolation, structure, synthesis, and endocrine activity.</title>
        <authorList>
            <person name="Mor A."/>
            <person name="Chartrel N."/>
            <person name="Vaudry H."/>
            <person name="Nicolas P."/>
        </authorList>
    </citation>
    <scope>PROTEIN SEQUENCE</scope>
    <source>
        <tissue>Skin secretion</tissue>
    </source>
</reference>
<reference key="2">
    <citation type="journal article" date="1996" name="FEBS Lett.">
        <title>Broad spectrum antibiotic activity of the skin-PYY.</title>
        <authorList>
            <person name="Vouldoukis I."/>
            <person name="Shai Y."/>
            <person name="Nicolas P."/>
            <person name="Mor A."/>
        </authorList>
    </citation>
    <scope>CHARACTERIZATION</scope>
</reference>
<protein>
    <recommendedName>
        <fullName>Skin peptide tyrosine-tyrosine</fullName>
        <shortName>SPYY</shortName>
        <shortName>Skin-PYY</shortName>
    </recommendedName>
</protein>